<keyword id="KW-0965">Cell junction</keyword>
<keyword id="KW-1003">Cell membrane</keyword>
<keyword id="KW-0963">Cytoplasm</keyword>
<keyword id="KW-0217">Developmental protein</keyword>
<keyword id="KW-0303">Gap junction</keyword>
<keyword id="KW-0407">Ion channel</keyword>
<keyword id="KW-0406">Ion transport</keyword>
<keyword id="KW-0472">Membrane</keyword>
<keyword id="KW-0597">Phosphoprotein</keyword>
<keyword id="KW-1185">Reference proteome</keyword>
<keyword id="KW-0812">Transmembrane</keyword>
<keyword id="KW-1133">Transmembrane helix</keyword>
<keyword id="KW-0813">Transport</keyword>
<accession>Q9VAS7</accession>
<dbReference type="EMBL" id="AF172258">
    <property type="protein sequence ID" value="AAF87944.1"/>
    <property type="molecule type" value="mRNA"/>
</dbReference>
<dbReference type="EMBL" id="AE014297">
    <property type="protein sequence ID" value="AAF56822.1"/>
    <property type="molecule type" value="Genomic_DNA"/>
</dbReference>
<dbReference type="EMBL" id="AY058643">
    <property type="protein sequence ID" value="AAL13872.1"/>
    <property type="molecule type" value="mRNA"/>
</dbReference>
<dbReference type="RefSeq" id="NP_001263050.1">
    <property type="nucleotide sequence ID" value="NM_001276121.1"/>
</dbReference>
<dbReference type="RefSeq" id="NP_001287575.1">
    <property type="nucleotide sequence ID" value="NM_001300646.1"/>
</dbReference>
<dbReference type="RefSeq" id="NP_524730.1">
    <property type="nucleotide sequence ID" value="NM_079991.3"/>
</dbReference>
<dbReference type="SMR" id="Q9VAS7"/>
<dbReference type="BioGRID" id="68931">
    <property type="interactions" value="5"/>
</dbReference>
<dbReference type="DIP" id="DIP-21773N"/>
<dbReference type="FunCoup" id="Q9VAS7">
    <property type="interactions" value="21"/>
</dbReference>
<dbReference type="IntAct" id="Q9VAS7">
    <property type="interactions" value="4"/>
</dbReference>
<dbReference type="STRING" id="7227.FBpp0303338"/>
<dbReference type="iPTMnet" id="Q9VAS7"/>
<dbReference type="PaxDb" id="7227-FBpp0303338"/>
<dbReference type="DNASU" id="44266"/>
<dbReference type="EnsemblMetazoa" id="FBtr0085350">
    <property type="protein sequence ID" value="FBpp0084719"/>
    <property type="gene ID" value="FBgn0265274"/>
</dbReference>
<dbReference type="EnsemblMetazoa" id="FBtr0330306">
    <property type="protein sequence ID" value="FBpp0303338"/>
    <property type="gene ID" value="FBgn0265274"/>
</dbReference>
<dbReference type="EnsemblMetazoa" id="FBtr0345207">
    <property type="protein sequence ID" value="FBpp0311402"/>
    <property type="gene ID" value="FBgn0265274"/>
</dbReference>
<dbReference type="GeneID" id="44266"/>
<dbReference type="KEGG" id="dme:Dmel_CG1448"/>
<dbReference type="AGR" id="FB:FBgn0265274"/>
<dbReference type="CTD" id="44266"/>
<dbReference type="FlyBase" id="FBgn0265274">
    <property type="gene designation" value="Inx3"/>
</dbReference>
<dbReference type="VEuPathDB" id="VectorBase:FBgn0265274"/>
<dbReference type="eggNOG" id="ENOG502S565">
    <property type="taxonomic scope" value="Eukaryota"/>
</dbReference>
<dbReference type="HOGENOM" id="CLU_035763_1_1_1"/>
<dbReference type="InParanoid" id="Q9VAS7"/>
<dbReference type="OMA" id="RIIKYFM"/>
<dbReference type="OrthoDB" id="5867527at2759"/>
<dbReference type="PhylomeDB" id="Q9VAS7"/>
<dbReference type="BioGRID-ORCS" id="44266">
    <property type="hits" value="0 hits in 1 CRISPR screen"/>
</dbReference>
<dbReference type="ChiTaRS" id="Inx3">
    <property type="organism name" value="fly"/>
</dbReference>
<dbReference type="GenomeRNAi" id="44266"/>
<dbReference type="PRO" id="PR:Q9VAS7"/>
<dbReference type="Proteomes" id="UP000000803">
    <property type="component" value="Chromosome 3R"/>
</dbReference>
<dbReference type="Bgee" id="FBgn0265274">
    <property type="expression patterns" value="Expressed in wing disc and 176 other cell types or tissues"/>
</dbReference>
<dbReference type="ExpressionAtlas" id="Q9VAS7">
    <property type="expression patterns" value="baseline and differential"/>
</dbReference>
<dbReference type="GO" id="GO:0016327">
    <property type="term" value="C:apicolateral plasma membrane"/>
    <property type="evidence" value="ECO:0007669"/>
    <property type="project" value="UniProtKB-SubCell"/>
</dbReference>
<dbReference type="GO" id="GO:0005737">
    <property type="term" value="C:cytoplasm"/>
    <property type="evidence" value="ECO:0007669"/>
    <property type="project" value="UniProtKB-SubCell"/>
</dbReference>
<dbReference type="GO" id="GO:0005921">
    <property type="term" value="C:gap junction"/>
    <property type="evidence" value="ECO:0000314"/>
    <property type="project" value="UniProtKB"/>
</dbReference>
<dbReference type="GO" id="GO:0016328">
    <property type="term" value="C:lateral plasma membrane"/>
    <property type="evidence" value="ECO:0000314"/>
    <property type="project" value="FlyBase"/>
</dbReference>
<dbReference type="GO" id="GO:0016020">
    <property type="term" value="C:membrane"/>
    <property type="evidence" value="ECO:0000303"/>
    <property type="project" value="UniProtKB"/>
</dbReference>
<dbReference type="GO" id="GO:0005886">
    <property type="term" value="C:plasma membrane"/>
    <property type="evidence" value="ECO:0000314"/>
    <property type="project" value="FlyBase"/>
</dbReference>
<dbReference type="GO" id="GO:0005243">
    <property type="term" value="F:gap junction channel activity"/>
    <property type="evidence" value="ECO:0000314"/>
    <property type="project" value="FlyBase"/>
</dbReference>
<dbReference type="GO" id="GO:0007391">
    <property type="term" value="P:dorsal closure"/>
    <property type="evidence" value="ECO:0000315"/>
    <property type="project" value="FlyBase"/>
</dbReference>
<dbReference type="GO" id="GO:0010496">
    <property type="term" value="P:intercellular transport"/>
    <property type="evidence" value="ECO:0000314"/>
    <property type="project" value="FlyBase"/>
</dbReference>
<dbReference type="GO" id="GO:0034220">
    <property type="term" value="P:monoatomic ion transmembrane transport"/>
    <property type="evidence" value="ECO:0007669"/>
    <property type="project" value="UniProtKB-KW"/>
</dbReference>
<dbReference type="GO" id="GO:0007602">
    <property type="term" value="P:phototransduction"/>
    <property type="evidence" value="ECO:0000318"/>
    <property type="project" value="GO_Central"/>
</dbReference>
<dbReference type="GO" id="GO:0007603">
    <property type="term" value="P:phototransduction, visible light"/>
    <property type="evidence" value="ECO:0000316"/>
    <property type="project" value="FlyBase"/>
</dbReference>
<dbReference type="InterPro" id="IPR000990">
    <property type="entry name" value="Innexin"/>
</dbReference>
<dbReference type="PANTHER" id="PTHR11893">
    <property type="entry name" value="INNEXIN"/>
    <property type="match status" value="1"/>
</dbReference>
<dbReference type="PANTHER" id="PTHR11893:SF37">
    <property type="entry name" value="INNEXIN INX3"/>
    <property type="match status" value="1"/>
</dbReference>
<dbReference type="Pfam" id="PF00876">
    <property type="entry name" value="Innexin"/>
    <property type="match status" value="1"/>
</dbReference>
<dbReference type="PRINTS" id="PR01262">
    <property type="entry name" value="INNEXIN"/>
</dbReference>
<dbReference type="PROSITE" id="PS51013">
    <property type="entry name" value="PANNEXIN"/>
    <property type="match status" value="1"/>
</dbReference>
<reference key="1">
    <citation type="journal article" date="2000" name="Mol. Biol. Cell">
        <title>Two Drosophila innexins are expressed in overlapping domains and cooperate to form gap-junction channels.</title>
        <authorList>
            <person name="Stebbings L.A."/>
            <person name="Todman M.G."/>
            <person name="Phelan P."/>
            <person name="Bacon J.P."/>
            <person name="Davies J.A."/>
        </authorList>
    </citation>
    <scope>NUCLEOTIDE SEQUENCE [MRNA]</scope>
    <scope>SUBUNIT</scope>
    <scope>TISSUE SPECIFICITY</scope>
    <source>
        <tissue>Embryo</tissue>
    </source>
</reference>
<reference key="2">
    <citation type="journal article" date="2000" name="Science">
        <title>The genome sequence of Drosophila melanogaster.</title>
        <authorList>
            <person name="Adams M.D."/>
            <person name="Celniker S.E."/>
            <person name="Holt R.A."/>
            <person name="Evans C.A."/>
            <person name="Gocayne J.D."/>
            <person name="Amanatides P.G."/>
            <person name="Scherer S.E."/>
            <person name="Li P.W."/>
            <person name="Hoskins R.A."/>
            <person name="Galle R.F."/>
            <person name="George R.A."/>
            <person name="Lewis S.E."/>
            <person name="Richards S."/>
            <person name="Ashburner M."/>
            <person name="Henderson S.N."/>
            <person name="Sutton G.G."/>
            <person name="Wortman J.R."/>
            <person name="Yandell M.D."/>
            <person name="Zhang Q."/>
            <person name="Chen L.X."/>
            <person name="Brandon R.C."/>
            <person name="Rogers Y.-H.C."/>
            <person name="Blazej R.G."/>
            <person name="Champe M."/>
            <person name="Pfeiffer B.D."/>
            <person name="Wan K.H."/>
            <person name="Doyle C."/>
            <person name="Baxter E.G."/>
            <person name="Helt G."/>
            <person name="Nelson C.R."/>
            <person name="Miklos G.L.G."/>
            <person name="Abril J.F."/>
            <person name="Agbayani A."/>
            <person name="An H.-J."/>
            <person name="Andrews-Pfannkoch C."/>
            <person name="Baldwin D."/>
            <person name="Ballew R.M."/>
            <person name="Basu A."/>
            <person name="Baxendale J."/>
            <person name="Bayraktaroglu L."/>
            <person name="Beasley E.M."/>
            <person name="Beeson K.Y."/>
            <person name="Benos P.V."/>
            <person name="Berman B.P."/>
            <person name="Bhandari D."/>
            <person name="Bolshakov S."/>
            <person name="Borkova D."/>
            <person name="Botchan M.R."/>
            <person name="Bouck J."/>
            <person name="Brokstein P."/>
            <person name="Brottier P."/>
            <person name="Burtis K.C."/>
            <person name="Busam D.A."/>
            <person name="Butler H."/>
            <person name="Cadieu E."/>
            <person name="Center A."/>
            <person name="Chandra I."/>
            <person name="Cherry J.M."/>
            <person name="Cawley S."/>
            <person name="Dahlke C."/>
            <person name="Davenport L.B."/>
            <person name="Davies P."/>
            <person name="de Pablos B."/>
            <person name="Delcher A."/>
            <person name="Deng Z."/>
            <person name="Mays A.D."/>
            <person name="Dew I."/>
            <person name="Dietz S.M."/>
            <person name="Dodson K."/>
            <person name="Doup L.E."/>
            <person name="Downes M."/>
            <person name="Dugan-Rocha S."/>
            <person name="Dunkov B.C."/>
            <person name="Dunn P."/>
            <person name="Durbin K.J."/>
            <person name="Evangelista C.C."/>
            <person name="Ferraz C."/>
            <person name="Ferriera S."/>
            <person name="Fleischmann W."/>
            <person name="Fosler C."/>
            <person name="Gabrielian A.E."/>
            <person name="Garg N.S."/>
            <person name="Gelbart W.M."/>
            <person name="Glasser K."/>
            <person name="Glodek A."/>
            <person name="Gong F."/>
            <person name="Gorrell J.H."/>
            <person name="Gu Z."/>
            <person name="Guan P."/>
            <person name="Harris M."/>
            <person name="Harris N.L."/>
            <person name="Harvey D.A."/>
            <person name="Heiman T.J."/>
            <person name="Hernandez J.R."/>
            <person name="Houck J."/>
            <person name="Hostin D."/>
            <person name="Houston K.A."/>
            <person name="Howland T.J."/>
            <person name="Wei M.-H."/>
            <person name="Ibegwam C."/>
            <person name="Jalali M."/>
            <person name="Kalush F."/>
            <person name="Karpen G.H."/>
            <person name="Ke Z."/>
            <person name="Kennison J.A."/>
            <person name="Ketchum K.A."/>
            <person name="Kimmel B.E."/>
            <person name="Kodira C.D."/>
            <person name="Kraft C.L."/>
            <person name="Kravitz S."/>
            <person name="Kulp D."/>
            <person name="Lai Z."/>
            <person name="Lasko P."/>
            <person name="Lei Y."/>
            <person name="Levitsky A.A."/>
            <person name="Li J.H."/>
            <person name="Li Z."/>
            <person name="Liang Y."/>
            <person name="Lin X."/>
            <person name="Liu X."/>
            <person name="Mattei B."/>
            <person name="McIntosh T.C."/>
            <person name="McLeod M.P."/>
            <person name="McPherson D."/>
            <person name="Merkulov G."/>
            <person name="Milshina N.V."/>
            <person name="Mobarry C."/>
            <person name="Morris J."/>
            <person name="Moshrefi A."/>
            <person name="Mount S.M."/>
            <person name="Moy M."/>
            <person name="Murphy B."/>
            <person name="Murphy L."/>
            <person name="Muzny D.M."/>
            <person name="Nelson D.L."/>
            <person name="Nelson D.R."/>
            <person name="Nelson K.A."/>
            <person name="Nixon K."/>
            <person name="Nusskern D.R."/>
            <person name="Pacleb J.M."/>
            <person name="Palazzolo M."/>
            <person name="Pittman G.S."/>
            <person name="Pan S."/>
            <person name="Pollard J."/>
            <person name="Puri V."/>
            <person name="Reese M.G."/>
            <person name="Reinert K."/>
            <person name="Remington K."/>
            <person name="Saunders R.D.C."/>
            <person name="Scheeler F."/>
            <person name="Shen H."/>
            <person name="Shue B.C."/>
            <person name="Siden-Kiamos I."/>
            <person name="Simpson M."/>
            <person name="Skupski M.P."/>
            <person name="Smith T.J."/>
            <person name="Spier E."/>
            <person name="Spradling A.C."/>
            <person name="Stapleton M."/>
            <person name="Strong R."/>
            <person name="Sun E."/>
            <person name="Svirskas R."/>
            <person name="Tector C."/>
            <person name="Turner R."/>
            <person name="Venter E."/>
            <person name="Wang A.H."/>
            <person name="Wang X."/>
            <person name="Wang Z.-Y."/>
            <person name="Wassarman D.A."/>
            <person name="Weinstock G.M."/>
            <person name="Weissenbach J."/>
            <person name="Williams S.M."/>
            <person name="Woodage T."/>
            <person name="Worley K.C."/>
            <person name="Wu D."/>
            <person name="Yang S."/>
            <person name="Yao Q.A."/>
            <person name="Ye J."/>
            <person name="Yeh R.-F."/>
            <person name="Zaveri J.S."/>
            <person name="Zhan M."/>
            <person name="Zhang G."/>
            <person name="Zhao Q."/>
            <person name="Zheng L."/>
            <person name="Zheng X.H."/>
            <person name="Zhong F.N."/>
            <person name="Zhong W."/>
            <person name="Zhou X."/>
            <person name="Zhu S.C."/>
            <person name="Zhu X."/>
            <person name="Smith H.O."/>
            <person name="Gibbs R.A."/>
            <person name="Myers E.W."/>
            <person name="Rubin G.M."/>
            <person name="Venter J.C."/>
        </authorList>
    </citation>
    <scope>NUCLEOTIDE SEQUENCE [LARGE SCALE GENOMIC DNA]</scope>
    <source>
        <strain>Berkeley</strain>
    </source>
</reference>
<reference key="3">
    <citation type="journal article" date="2002" name="Genome Biol.">
        <title>Annotation of the Drosophila melanogaster euchromatic genome: a systematic review.</title>
        <authorList>
            <person name="Misra S."/>
            <person name="Crosby M.A."/>
            <person name="Mungall C.J."/>
            <person name="Matthews B.B."/>
            <person name="Campbell K.S."/>
            <person name="Hradecky P."/>
            <person name="Huang Y."/>
            <person name="Kaminker J.S."/>
            <person name="Millburn G.H."/>
            <person name="Prochnik S.E."/>
            <person name="Smith C.D."/>
            <person name="Tupy J.L."/>
            <person name="Whitfield E.J."/>
            <person name="Bayraktaroglu L."/>
            <person name="Berman B.P."/>
            <person name="Bettencourt B.R."/>
            <person name="Celniker S.E."/>
            <person name="de Grey A.D.N.J."/>
            <person name="Drysdale R.A."/>
            <person name="Harris N.L."/>
            <person name="Richter J."/>
            <person name="Russo S."/>
            <person name="Schroeder A.J."/>
            <person name="Shu S.Q."/>
            <person name="Stapleton M."/>
            <person name="Yamada C."/>
            <person name="Ashburner M."/>
            <person name="Gelbart W.M."/>
            <person name="Rubin G.M."/>
            <person name="Lewis S.E."/>
        </authorList>
    </citation>
    <scope>GENOME REANNOTATION</scope>
    <source>
        <strain>Berkeley</strain>
    </source>
</reference>
<reference key="4">
    <citation type="journal article" date="2002" name="Genome Biol.">
        <title>A Drosophila full-length cDNA resource.</title>
        <authorList>
            <person name="Stapleton M."/>
            <person name="Carlson J.W."/>
            <person name="Brokstein P."/>
            <person name="Yu C."/>
            <person name="Champe M."/>
            <person name="George R.A."/>
            <person name="Guarin H."/>
            <person name="Kronmiller B."/>
            <person name="Pacleb J.M."/>
            <person name="Park S."/>
            <person name="Wan K.H."/>
            <person name="Rubin G.M."/>
            <person name="Celniker S.E."/>
        </authorList>
    </citation>
    <scope>NUCLEOTIDE SEQUENCE [LARGE SCALE MRNA]</scope>
    <source>
        <strain>Berkeley</strain>
        <tissue>Embryo</tissue>
    </source>
</reference>
<reference key="5">
    <citation type="journal article" date="2002" name="Mech. Dev.">
        <title>Gap junctions in Drosophila: developmental expression of the entire innexin gene family.</title>
        <authorList>
            <person name="Stebbings L.A."/>
            <person name="Todman M.G."/>
            <person name="Phillips R."/>
            <person name="Greer C.E."/>
            <person name="Tam J."/>
            <person name="Phelan P."/>
            <person name="Jacobs K."/>
            <person name="Bacon J.P."/>
            <person name="Davies J.A."/>
        </authorList>
    </citation>
    <scope>TISSUE SPECIFICITY</scope>
    <scope>DEVELOPMENTAL STAGE</scope>
</reference>
<reference key="6">
    <citation type="journal article" date="2006" name="Mol. Biol. Cell">
        <title>Heteromerization of innexin gap junction proteins regulates epithelial tissue organization in Drosophila.</title>
        <authorList>
            <person name="Lehmann C."/>
            <person name="Lechner H."/>
            <person name="Loer B."/>
            <person name="Knieps M."/>
            <person name="Herrmann S."/>
            <person name="Famulok M."/>
            <person name="Bauer R."/>
            <person name="Hoch M."/>
        </authorList>
    </citation>
    <scope>FUNCTION</scope>
    <scope>INTERACTION WITH INX2</scope>
    <scope>SUBCELLULAR LOCATION</scope>
    <scope>TISSUE SPECIFICITY</scope>
    <scope>DEVELOPMENTAL STAGE</scope>
</reference>
<reference key="7">
    <citation type="journal article" date="2008" name="BMC Dev. Biol.">
        <title>Gap junctions in the ovary of Drosophila melanogaster: localization of innexins 1, 2, 3 and 4 and evidence for intercellular communication via innexin-2 containing channels.</title>
        <authorList>
            <person name="Bohrmann J."/>
            <person name="Zimmermann J."/>
        </authorList>
    </citation>
    <scope>SUBCELLULAR LOCATION</scope>
    <scope>TISSUE SPECIFICITY</scope>
</reference>
<reference key="8">
    <citation type="journal article" date="2008" name="J. Proteome Res.">
        <title>Phosphoproteome analysis of Drosophila melanogaster embryos.</title>
        <authorList>
            <person name="Zhai B."/>
            <person name="Villen J."/>
            <person name="Beausoleil S.A."/>
            <person name="Mintseris J."/>
            <person name="Gygi S.P."/>
        </authorList>
    </citation>
    <scope>PHOSPHORYLATION [LARGE SCALE ANALYSIS] AT SER-366; SER-377 AND TYR-381</scope>
    <scope>IDENTIFICATION BY MASS SPECTROMETRY</scope>
    <source>
        <tissue>Embryo</tissue>
    </source>
</reference>
<name>INX3_DROME</name>
<sequence length="395" mass="45357">MAVFGMVSAVSGFIKIRYLLDKAVIDNMVFRCHYRITTAILFTCCIIVTANNLIGDPISCINDGAIPMHVINTFCWITYTYTIPGQQHRQIGTDVAGPGLGNEYGQEKRYHSYYQWVPFVLFFQGLMFYVPHWVWKNMEDGKIRMITDGLRGMVSVPDDYRRDRQDRILKYFVNSLNTHNGYSFAYFFCELLNFINVIVNIFMVDKFLGGAFMSYGTDVLKFSNMDQDKRFDPMIEIFPRLTKCTFHKFGPSGSVQKHDTLCVLALNILNEKIYIFLWFWFIILATISGVAVLYSLVVIMMPTTRETIIKRSYRSAQRKEIAGLVRRLEIGDFLILHFLSQNLSTRSYSDMLQQLCGLLGASRTPSAPSTLEMNRISHPIYPPVETFGGGKETET</sequence>
<protein>
    <recommendedName>
        <fullName>Innexin inx3</fullName>
        <shortName>Innexin-3</shortName>
    </recommendedName>
</protein>
<evidence type="ECO:0000255" key="1"/>
<evidence type="ECO:0000255" key="2">
    <source>
        <dbReference type="PROSITE-ProRule" id="PRU00351"/>
    </source>
</evidence>
<evidence type="ECO:0000269" key="3">
    <source>
    </source>
</evidence>
<evidence type="ECO:0000269" key="4">
    <source>
    </source>
</evidence>
<evidence type="ECO:0000269" key="5">
    <source>
    </source>
</evidence>
<evidence type="ECO:0000269" key="6">
    <source>
    </source>
</evidence>
<evidence type="ECO:0000269" key="7">
    <source>
    </source>
</evidence>
<evidence type="ECO:0000305" key="8"/>
<organism>
    <name type="scientific">Drosophila melanogaster</name>
    <name type="common">Fruit fly</name>
    <dbReference type="NCBI Taxonomy" id="7227"/>
    <lineage>
        <taxon>Eukaryota</taxon>
        <taxon>Metazoa</taxon>
        <taxon>Ecdysozoa</taxon>
        <taxon>Arthropoda</taxon>
        <taxon>Hexapoda</taxon>
        <taxon>Insecta</taxon>
        <taxon>Pterygota</taxon>
        <taxon>Neoptera</taxon>
        <taxon>Endopterygota</taxon>
        <taxon>Diptera</taxon>
        <taxon>Brachycera</taxon>
        <taxon>Muscomorpha</taxon>
        <taxon>Ephydroidea</taxon>
        <taxon>Drosophilidae</taxon>
        <taxon>Drosophila</taxon>
        <taxon>Sophophora</taxon>
    </lineage>
</organism>
<gene>
    <name type="primary">Inx3</name>
    <name type="ORF">CG1448</name>
</gene>
<proteinExistence type="evidence at protein level"/>
<comment type="function">
    <text evidence="5">Structural components of the gap junctions. Essential for proper epithelial development of the epidermis.</text>
</comment>
<comment type="subunit">
    <text evidence="3">Heterooligomer of Inx2 (via cytoplasmic C-terminal region) and Inx3 (via cytoplasmic C-terminal region).</text>
</comment>
<comment type="subcellular location">
    <subcellularLocation>
        <location evidence="8">Cell membrane</location>
        <topology evidence="2">Multi-pass membrane protein</topology>
    </subcellularLocation>
    <subcellularLocation>
        <location>Cell junction</location>
        <location>Gap junction</location>
    </subcellularLocation>
    <subcellularLocation>
        <location>Cytoplasm</location>
    </subcellularLocation>
    <subcellularLocation>
        <location>Lateral cell membrane</location>
    </subcellularLocation>
    <subcellularLocation>
        <location>Apicolateral cell membrane</location>
    </subcellularLocation>
    <text>In ovary, localizes to the lateral membrane of follicle cells covering the oocyte and to the apicolateral membrane of follicle cells covering the nurse cells. In nurse cells, localizes to the membrane and around the nuclei.</text>
</comment>
<comment type="tissue specificity">
    <text evidence="3 4 5 7">In ovary, expressed in nurse cells and follicle cells. Expressed in embryonic epithelial cells. Ubiquitously expressed in stage 5 embryos. Expressed in foregut and hindgut from stage 11-17 and in proventriculus, epidermis and CNS in stage 16 embryos (at protein level). Expressed in anterior and ventral regions in stage 8 embryos. Repeating epidermal pattern emerges at stage 11, refines to one or two cells at each side of the segment borders by stage 13. Expressed in the imaginal wing disk. In pupae, expressed in the CNS and in secondary and tertiary pigment cells of the retina.</text>
</comment>
<comment type="developmental stage">
    <text evidence="4 5">Expressed during embryogenesis (at protein level). Expressed in larvae and pupae.</text>
</comment>
<comment type="similarity">
    <text evidence="2">Belongs to the pannexin family.</text>
</comment>
<feature type="chain" id="PRO_0000208498" description="Innexin inx3">
    <location>
        <begin position="1"/>
        <end position="395"/>
    </location>
</feature>
<feature type="topological domain" description="Cytoplasmic" evidence="1">
    <location>
        <begin position="1"/>
        <end position="37"/>
    </location>
</feature>
<feature type="transmembrane region" description="Helical" evidence="2">
    <location>
        <begin position="38"/>
        <end position="58"/>
    </location>
</feature>
<feature type="topological domain" description="Extracellular" evidence="1">
    <location>
        <begin position="59"/>
        <end position="114"/>
    </location>
</feature>
<feature type="transmembrane region" description="Helical" evidence="2">
    <location>
        <begin position="115"/>
        <end position="135"/>
    </location>
</feature>
<feature type="topological domain" description="Cytoplasmic" evidence="1">
    <location>
        <begin position="136"/>
        <end position="183"/>
    </location>
</feature>
<feature type="transmembrane region" description="Helical" evidence="2">
    <location>
        <begin position="184"/>
        <end position="204"/>
    </location>
</feature>
<feature type="topological domain" description="Extracellular" evidence="1">
    <location>
        <begin position="205"/>
        <end position="272"/>
    </location>
</feature>
<feature type="transmembrane region" description="Helical" evidence="2">
    <location>
        <begin position="273"/>
        <end position="293"/>
    </location>
</feature>
<feature type="topological domain" description="Cytoplasmic" evidence="1">
    <location>
        <begin position="294"/>
        <end position="395"/>
    </location>
</feature>
<feature type="modified residue" description="Phosphoserine" evidence="6">
    <location>
        <position position="366"/>
    </location>
</feature>
<feature type="modified residue" description="Phosphoserine" evidence="6">
    <location>
        <position position="377"/>
    </location>
</feature>
<feature type="modified residue" description="Phosphotyrosine" evidence="6">
    <location>
        <position position="381"/>
    </location>
</feature>